<reference key="1">
    <citation type="journal article" date="2007" name="Genome Res.">
        <title>Lateral gene transfer between obligate intracellular bacteria: evidence from the Rickettsia massiliae genome.</title>
        <authorList>
            <person name="Blanc G."/>
            <person name="Ogata H."/>
            <person name="Robert C."/>
            <person name="Audic S."/>
            <person name="Claverie J.-M."/>
            <person name="Raoult D."/>
        </authorList>
    </citation>
    <scope>NUCLEOTIDE SEQUENCE [LARGE SCALE GENOMIC DNA]</scope>
    <source>
        <strain>Mtu5</strain>
    </source>
</reference>
<organism>
    <name type="scientific">Rickettsia massiliae (strain Mtu5)</name>
    <dbReference type="NCBI Taxonomy" id="416276"/>
    <lineage>
        <taxon>Bacteria</taxon>
        <taxon>Pseudomonadati</taxon>
        <taxon>Pseudomonadota</taxon>
        <taxon>Alphaproteobacteria</taxon>
        <taxon>Rickettsiales</taxon>
        <taxon>Rickettsiaceae</taxon>
        <taxon>Rickettsieae</taxon>
        <taxon>Rickettsia</taxon>
        <taxon>spotted fever group</taxon>
    </lineage>
</organism>
<comment type="function">
    <text evidence="1">Catalyzes the stereoinversion of LL-2,6-diaminopimelate (L,L-DAP) to meso-diaminopimelate (meso-DAP), a precursor of L-lysine and an essential component of the bacterial peptidoglycan.</text>
</comment>
<comment type="catalytic activity">
    <reaction evidence="1">
        <text>(2S,6S)-2,6-diaminopimelate = meso-2,6-diaminopimelate</text>
        <dbReference type="Rhea" id="RHEA:15393"/>
        <dbReference type="ChEBI" id="CHEBI:57609"/>
        <dbReference type="ChEBI" id="CHEBI:57791"/>
        <dbReference type="EC" id="5.1.1.7"/>
    </reaction>
</comment>
<comment type="pathway">
    <text evidence="1">Amino-acid biosynthesis; L-lysine biosynthesis via DAP pathway; DL-2,6-diaminopimelate from LL-2,6-diaminopimelate: step 1/1.</text>
</comment>
<comment type="subunit">
    <text evidence="1">Homodimer.</text>
</comment>
<comment type="subcellular location">
    <subcellularLocation>
        <location evidence="1">Cytoplasm</location>
    </subcellularLocation>
</comment>
<comment type="similarity">
    <text evidence="1">Belongs to the diaminopimelate epimerase family.</text>
</comment>
<keyword id="KW-0028">Amino-acid biosynthesis</keyword>
<keyword id="KW-0963">Cytoplasm</keyword>
<keyword id="KW-0413">Isomerase</keyword>
<keyword id="KW-0457">Lysine biosynthesis</keyword>
<accession>A8F1I9</accession>
<protein>
    <recommendedName>
        <fullName evidence="1">Diaminopimelate epimerase</fullName>
        <shortName evidence="1">DAP epimerase</shortName>
        <ecNumber evidence="1">5.1.1.7</ecNumber>
    </recommendedName>
    <alternativeName>
        <fullName evidence="1">PLP-independent amino acid racemase</fullName>
    </alternativeName>
</protein>
<proteinExistence type="inferred from homology"/>
<name>DAPF_RICM5</name>
<gene>
    <name evidence="1" type="primary">dapF</name>
    <name type="ordered locus">RMA_0596</name>
</gene>
<evidence type="ECO:0000255" key="1">
    <source>
        <dbReference type="HAMAP-Rule" id="MF_00197"/>
    </source>
</evidence>
<sequence length="270" mass="29957">MISKINFVKMHGLGNDFVIVNKRDLSSSYDLSQLAKNMAERHTGIGCDQFIIYEEHNDFYEMIIYNIDGSSAKLCGNATRCLAKLIYLDTGKKDITVMVGNKKLLCNVNDENNISVNVGSVSFNEAWMPSRDKVWAFAERYMIDLKETICVDIGNPHLIIFSKLEPQDQKIVGEKLQAKELFADGVNVNFAEVKDNKIYLSVWERGAGLTLACGSGACGSFAAGLKLGFIHSPSTIVFKHGNLTMKEENGNIIMQGAATLVARGEYYCEQ</sequence>
<dbReference type="EC" id="5.1.1.7" evidence="1"/>
<dbReference type="EMBL" id="CP000683">
    <property type="protein sequence ID" value="ABV84775.1"/>
    <property type="molecule type" value="Genomic_DNA"/>
</dbReference>
<dbReference type="RefSeq" id="WP_012152750.1">
    <property type="nucleotide sequence ID" value="NC_009900.1"/>
</dbReference>
<dbReference type="SMR" id="A8F1I9"/>
<dbReference type="KEGG" id="rms:RMA_0596"/>
<dbReference type="HOGENOM" id="CLU_053306_1_0_5"/>
<dbReference type="UniPathway" id="UPA00034">
    <property type="reaction ID" value="UER00025"/>
</dbReference>
<dbReference type="Proteomes" id="UP000001311">
    <property type="component" value="Chromosome"/>
</dbReference>
<dbReference type="GO" id="GO:0005829">
    <property type="term" value="C:cytosol"/>
    <property type="evidence" value="ECO:0007669"/>
    <property type="project" value="TreeGrafter"/>
</dbReference>
<dbReference type="GO" id="GO:0008837">
    <property type="term" value="F:diaminopimelate epimerase activity"/>
    <property type="evidence" value="ECO:0007669"/>
    <property type="project" value="UniProtKB-UniRule"/>
</dbReference>
<dbReference type="GO" id="GO:0009089">
    <property type="term" value="P:lysine biosynthetic process via diaminopimelate"/>
    <property type="evidence" value="ECO:0007669"/>
    <property type="project" value="UniProtKB-UniRule"/>
</dbReference>
<dbReference type="Gene3D" id="3.10.310.10">
    <property type="entry name" value="Diaminopimelate Epimerase, Chain A, domain 1"/>
    <property type="match status" value="2"/>
</dbReference>
<dbReference type="HAMAP" id="MF_00197">
    <property type="entry name" value="DAP_epimerase"/>
    <property type="match status" value="1"/>
</dbReference>
<dbReference type="InterPro" id="IPR018510">
    <property type="entry name" value="DAP_epimerase_AS"/>
</dbReference>
<dbReference type="InterPro" id="IPR001653">
    <property type="entry name" value="DAP_epimerase_DapF"/>
</dbReference>
<dbReference type="NCBIfam" id="TIGR00652">
    <property type="entry name" value="DapF"/>
    <property type="match status" value="1"/>
</dbReference>
<dbReference type="PANTHER" id="PTHR31689:SF0">
    <property type="entry name" value="DIAMINOPIMELATE EPIMERASE"/>
    <property type="match status" value="1"/>
</dbReference>
<dbReference type="PANTHER" id="PTHR31689">
    <property type="entry name" value="DIAMINOPIMELATE EPIMERASE, CHLOROPLASTIC"/>
    <property type="match status" value="1"/>
</dbReference>
<dbReference type="Pfam" id="PF01678">
    <property type="entry name" value="DAP_epimerase"/>
    <property type="match status" value="2"/>
</dbReference>
<dbReference type="SUPFAM" id="SSF54506">
    <property type="entry name" value="Diaminopimelate epimerase-like"/>
    <property type="match status" value="2"/>
</dbReference>
<dbReference type="PROSITE" id="PS01326">
    <property type="entry name" value="DAP_EPIMERASE"/>
    <property type="match status" value="1"/>
</dbReference>
<feature type="chain" id="PRO_1000058544" description="Diaminopimelate epimerase">
    <location>
        <begin position="1"/>
        <end position="270"/>
    </location>
</feature>
<feature type="active site" description="Proton donor" evidence="1">
    <location>
        <position position="75"/>
    </location>
</feature>
<feature type="active site" description="Proton acceptor" evidence="1">
    <location>
        <position position="213"/>
    </location>
</feature>
<feature type="binding site" evidence="1">
    <location>
        <position position="15"/>
    </location>
    <ligand>
        <name>substrate</name>
    </ligand>
</feature>
<feature type="binding site" evidence="1">
    <location>
        <position position="49"/>
    </location>
    <ligand>
        <name>substrate</name>
    </ligand>
</feature>
<feature type="binding site" evidence="1">
    <location>
        <position position="66"/>
    </location>
    <ligand>
        <name>substrate</name>
    </ligand>
</feature>
<feature type="binding site" evidence="1">
    <location>
        <begin position="76"/>
        <end position="77"/>
    </location>
    <ligand>
        <name>substrate</name>
    </ligand>
</feature>
<feature type="binding site" evidence="1">
    <location>
        <position position="155"/>
    </location>
    <ligand>
        <name>substrate</name>
    </ligand>
</feature>
<feature type="binding site" evidence="1">
    <location>
        <position position="187"/>
    </location>
    <ligand>
        <name>substrate</name>
    </ligand>
</feature>
<feature type="binding site" evidence="1">
    <location>
        <begin position="204"/>
        <end position="205"/>
    </location>
    <ligand>
        <name>substrate</name>
    </ligand>
</feature>
<feature type="binding site" evidence="1">
    <location>
        <begin position="214"/>
        <end position="215"/>
    </location>
    <ligand>
        <name>substrate</name>
    </ligand>
</feature>
<feature type="site" description="Could be important to modulate the pK values of the two catalytic cysteine residues" evidence="1">
    <location>
        <position position="157"/>
    </location>
</feature>
<feature type="site" description="Could be important to modulate the pK values of the two catalytic cysteine residues" evidence="1">
    <location>
        <position position="204"/>
    </location>
</feature>